<proteinExistence type="inferred from homology"/>
<evidence type="ECO:0000255" key="1">
    <source>
        <dbReference type="HAMAP-Rule" id="MF_00736"/>
    </source>
</evidence>
<evidence type="ECO:0000305" key="2"/>
<sequence length="143" mass="14972">MAKKIVGFIKLQVPAGKANPSPPIGPALGQRGLNIMEFCKAFNAQTQGVEPGLPLPVVITAFADKSFTFIIKTPPATTLIKKAIKLEKGSSNALSTKVGKITRAQLEEIAKTKLKDMNAANVDAAVRTLAGSARSMGVTVEGL</sequence>
<organism>
    <name type="scientific">Paracidovorax citrulli (strain AAC00-1)</name>
    <name type="common">Acidovorax citrulli</name>
    <dbReference type="NCBI Taxonomy" id="397945"/>
    <lineage>
        <taxon>Bacteria</taxon>
        <taxon>Pseudomonadati</taxon>
        <taxon>Pseudomonadota</taxon>
        <taxon>Betaproteobacteria</taxon>
        <taxon>Burkholderiales</taxon>
        <taxon>Comamonadaceae</taxon>
        <taxon>Paracidovorax</taxon>
    </lineage>
</organism>
<name>RL11_PARC0</name>
<feature type="chain" id="PRO_1000046126" description="Large ribosomal subunit protein uL11">
    <location>
        <begin position="1"/>
        <end position="143"/>
    </location>
</feature>
<dbReference type="EMBL" id="CP000512">
    <property type="protein sequence ID" value="ABM35072.1"/>
    <property type="molecule type" value="Genomic_DNA"/>
</dbReference>
<dbReference type="RefSeq" id="WP_011797541.1">
    <property type="nucleotide sequence ID" value="NC_008752.1"/>
</dbReference>
<dbReference type="SMR" id="A1TVT4"/>
<dbReference type="STRING" id="397945.Aave_4535"/>
<dbReference type="GeneID" id="79789514"/>
<dbReference type="KEGG" id="aav:Aave_4535"/>
<dbReference type="eggNOG" id="COG0080">
    <property type="taxonomic scope" value="Bacteria"/>
</dbReference>
<dbReference type="HOGENOM" id="CLU_074237_2_1_4"/>
<dbReference type="OrthoDB" id="9802408at2"/>
<dbReference type="Proteomes" id="UP000002596">
    <property type="component" value="Chromosome"/>
</dbReference>
<dbReference type="GO" id="GO:0022625">
    <property type="term" value="C:cytosolic large ribosomal subunit"/>
    <property type="evidence" value="ECO:0007669"/>
    <property type="project" value="TreeGrafter"/>
</dbReference>
<dbReference type="GO" id="GO:0070180">
    <property type="term" value="F:large ribosomal subunit rRNA binding"/>
    <property type="evidence" value="ECO:0007669"/>
    <property type="project" value="UniProtKB-UniRule"/>
</dbReference>
<dbReference type="GO" id="GO:0003735">
    <property type="term" value="F:structural constituent of ribosome"/>
    <property type="evidence" value="ECO:0007669"/>
    <property type="project" value="InterPro"/>
</dbReference>
<dbReference type="GO" id="GO:0006412">
    <property type="term" value="P:translation"/>
    <property type="evidence" value="ECO:0007669"/>
    <property type="project" value="UniProtKB-UniRule"/>
</dbReference>
<dbReference type="CDD" id="cd00349">
    <property type="entry name" value="Ribosomal_L11"/>
    <property type="match status" value="1"/>
</dbReference>
<dbReference type="FunFam" id="1.10.10.250:FF:000001">
    <property type="entry name" value="50S ribosomal protein L11"/>
    <property type="match status" value="1"/>
</dbReference>
<dbReference type="FunFam" id="3.30.1550.10:FF:000001">
    <property type="entry name" value="50S ribosomal protein L11"/>
    <property type="match status" value="1"/>
</dbReference>
<dbReference type="Gene3D" id="1.10.10.250">
    <property type="entry name" value="Ribosomal protein L11, C-terminal domain"/>
    <property type="match status" value="1"/>
</dbReference>
<dbReference type="Gene3D" id="3.30.1550.10">
    <property type="entry name" value="Ribosomal protein L11/L12, N-terminal domain"/>
    <property type="match status" value="1"/>
</dbReference>
<dbReference type="HAMAP" id="MF_00736">
    <property type="entry name" value="Ribosomal_uL11"/>
    <property type="match status" value="1"/>
</dbReference>
<dbReference type="InterPro" id="IPR000911">
    <property type="entry name" value="Ribosomal_uL11"/>
</dbReference>
<dbReference type="InterPro" id="IPR006519">
    <property type="entry name" value="Ribosomal_uL11_bac-typ"/>
</dbReference>
<dbReference type="InterPro" id="IPR020783">
    <property type="entry name" value="Ribosomal_uL11_C"/>
</dbReference>
<dbReference type="InterPro" id="IPR036769">
    <property type="entry name" value="Ribosomal_uL11_C_sf"/>
</dbReference>
<dbReference type="InterPro" id="IPR020785">
    <property type="entry name" value="Ribosomal_uL11_CS"/>
</dbReference>
<dbReference type="InterPro" id="IPR020784">
    <property type="entry name" value="Ribosomal_uL11_N"/>
</dbReference>
<dbReference type="InterPro" id="IPR036796">
    <property type="entry name" value="Ribosomal_uL11_N_sf"/>
</dbReference>
<dbReference type="NCBIfam" id="TIGR01632">
    <property type="entry name" value="L11_bact"/>
    <property type="match status" value="1"/>
</dbReference>
<dbReference type="PANTHER" id="PTHR11661">
    <property type="entry name" value="60S RIBOSOMAL PROTEIN L12"/>
    <property type="match status" value="1"/>
</dbReference>
<dbReference type="PANTHER" id="PTHR11661:SF1">
    <property type="entry name" value="LARGE RIBOSOMAL SUBUNIT PROTEIN UL11M"/>
    <property type="match status" value="1"/>
</dbReference>
<dbReference type="Pfam" id="PF00298">
    <property type="entry name" value="Ribosomal_L11"/>
    <property type="match status" value="1"/>
</dbReference>
<dbReference type="Pfam" id="PF03946">
    <property type="entry name" value="Ribosomal_L11_N"/>
    <property type="match status" value="1"/>
</dbReference>
<dbReference type="SMART" id="SM00649">
    <property type="entry name" value="RL11"/>
    <property type="match status" value="1"/>
</dbReference>
<dbReference type="SUPFAM" id="SSF54747">
    <property type="entry name" value="Ribosomal L11/L12e N-terminal domain"/>
    <property type="match status" value="1"/>
</dbReference>
<dbReference type="SUPFAM" id="SSF46906">
    <property type="entry name" value="Ribosomal protein L11, C-terminal domain"/>
    <property type="match status" value="1"/>
</dbReference>
<dbReference type="PROSITE" id="PS00359">
    <property type="entry name" value="RIBOSOMAL_L11"/>
    <property type="match status" value="1"/>
</dbReference>
<comment type="function">
    <text evidence="1">Forms part of the ribosomal stalk which helps the ribosome interact with GTP-bound translation factors.</text>
</comment>
<comment type="subunit">
    <text evidence="1">Part of the ribosomal stalk of the 50S ribosomal subunit. Interacts with L10 and the large rRNA to form the base of the stalk. L10 forms an elongated spine to which L12 dimers bind in a sequential fashion forming a multimeric L10(L12)X complex.</text>
</comment>
<comment type="PTM">
    <text evidence="1">One or more lysine residues are methylated.</text>
</comment>
<comment type="similarity">
    <text evidence="1">Belongs to the universal ribosomal protein uL11 family.</text>
</comment>
<accession>A1TVT4</accession>
<gene>
    <name evidence="1" type="primary">rplK</name>
    <name type="ordered locus">Aave_4535</name>
</gene>
<reference key="1">
    <citation type="submission" date="2006-12" db="EMBL/GenBank/DDBJ databases">
        <title>Complete sequence of Acidovorax avenae subsp. citrulli AAC00-1.</title>
        <authorList>
            <person name="Copeland A."/>
            <person name="Lucas S."/>
            <person name="Lapidus A."/>
            <person name="Barry K."/>
            <person name="Detter J.C."/>
            <person name="Glavina del Rio T."/>
            <person name="Dalin E."/>
            <person name="Tice H."/>
            <person name="Pitluck S."/>
            <person name="Kiss H."/>
            <person name="Brettin T."/>
            <person name="Bruce D."/>
            <person name="Han C."/>
            <person name="Tapia R."/>
            <person name="Gilna P."/>
            <person name="Schmutz J."/>
            <person name="Larimer F."/>
            <person name="Land M."/>
            <person name="Hauser L."/>
            <person name="Kyrpides N."/>
            <person name="Kim E."/>
            <person name="Stahl D."/>
            <person name="Richardson P."/>
        </authorList>
    </citation>
    <scope>NUCLEOTIDE SEQUENCE [LARGE SCALE GENOMIC DNA]</scope>
    <source>
        <strain>AAC00-1</strain>
    </source>
</reference>
<keyword id="KW-0488">Methylation</keyword>
<keyword id="KW-0687">Ribonucleoprotein</keyword>
<keyword id="KW-0689">Ribosomal protein</keyword>
<keyword id="KW-0694">RNA-binding</keyword>
<keyword id="KW-0699">rRNA-binding</keyword>
<protein>
    <recommendedName>
        <fullName evidence="1">Large ribosomal subunit protein uL11</fullName>
    </recommendedName>
    <alternativeName>
        <fullName evidence="2">50S ribosomal protein L11</fullName>
    </alternativeName>
</protein>